<keyword id="KW-1185">Reference proteome</keyword>
<accession>P23840</accession>
<accession>P76719</accession>
<accession>Q2M7V8</accession>
<name>DIND_ECOLI</name>
<proteinExistence type="predicted"/>
<reference key="1">
    <citation type="journal article" date="1989" name="Mol. Microbiol.">
        <title>Molecular and mutational analysis of three genes preceding pyrE on the Escherichia coli chromosome.</title>
        <authorList>
            <person name="Poulsen P."/>
            <person name="Andersen J.T."/>
            <person name="Jensen K.F."/>
        </authorList>
    </citation>
    <scope>NUCLEOTIDE SEQUENCE [GENOMIC DNA]</scope>
    <source>
        <strain>K12</strain>
    </source>
</reference>
<reference key="2">
    <citation type="journal article" date="1993" name="Genomics">
        <title>DNA sequence and analysis of 136 kilobases of the Escherichia coli genome: organizational symmetry around the origin of replication.</title>
        <authorList>
            <person name="Burland V.D."/>
            <person name="Plunkett G. III"/>
            <person name="Daniels D.L."/>
            <person name="Blattner F.R."/>
        </authorList>
    </citation>
    <scope>NUCLEOTIDE SEQUENCE [LARGE SCALE GENOMIC DNA]</scope>
    <source>
        <strain>K12 / MG1655 / ATCC 47076</strain>
    </source>
</reference>
<reference key="3">
    <citation type="journal article" date="1997" name="Science">
        <title>The complete genome sequence of Escherichia coli K-12.</title>
        <authorList>
            <person name="Blattner F.R."/>
            <person name="Plunkett G. III"/>
            <person name="Bloch C.A."/>
            <person name="Perna N.T."/>
            <person name="Burland V."/>
            <person name="Riley M."/>
            <person name="Collado-Vides J."/>
            <person name="Glasner J.D."/>
            <person name="Rode C.K."/>
            <person name="Mayhew G.F."/>
            <person name="Gregor J."/>
            <person name="Davis N.W."/>
            <person name="Kirkpatrick H.A."/>
            <person name="Goeden M.A."/>
            <person name="Rose D.J."/>
            <person name="Mau B."/>
            <person name="Shao Y."/>
        </authorList>
    </citation>
    <scope>NUCLEOTIDE SEQUENCE [LARGE SCALE GENOMIC DNA]</scope>
    <source>
        <strain>K12 / MG1655 / ATCC 47076</strain>
    </source>
</reference>
<reference key="4">
    <citation type="journal article" date="2006" name="Mol. Syst. Biol.">
        <title>Highly accurate genome sequences of Escherichia coli K-12 strains MG1655 and W3110.</title>
        <authorList>
            <person name="Hayashi K."/>
            <person name="Morooka N."/>
            <person name="Yamamoto Y."/>
            <person name="Fujita K."/>
            <person name="Isono K."/>
            <person name="Choi S."/>
            <person name="Ohtsubo E."/>
            <person name="Baba T."/>
            <person name="Wanner B.L."/>
            <person name="Mori H."/>
            <person name="Horiuchi T."/>
        </authorList>
    </citation>
    <scope>NUCLEOTIDE SEQUENCE [LARGE SCALE GENOMIC DNA]</scope>
    <source>
        <strain>K12 / W3110 / ATCC 27325 / DSM 5911</strain>
    </source>
</reference>
<reference key="5">
    <citation type="journal article" date="1990" name="J. Bacteriol.">
        <title>Bacterial transposon Tn7 utilizes two different classes of target sites.</title>
        <authorList>
            <person name="Kubo K.M."/>
            <person name="Craig N.L."/>
        </authorList>
    </citation>
    <scope>NUCLEOTIDE SEQUENCE [GENOMIC DNA] OF 137-167</scope>
</reference>
<reference key="6">
    <citation type="journal article" date="1991" name="Res. Microbiol.">
        <title>Three genes preceding pyrE on the Escherichia coli chromosome are essential for survival and normal cell morphology in stationary culture and at high temperature.</title>
        <authorList>
            <person name="Poulsen P."/>
            <person name="Jensen K.F."/>
        </authorList>
    </citation>
    <scope>DISRUPTION PHENOTYPE</scope>
    <scope>IMPORTANCE AT HIGH TEMPERATURE</scope>
    <source>
        <strain>K12 / MC4100 / ATCC 35695 / DSM 6574</strain>
    </source>
</reference>
<reference key="7">
    <citation type="journal article" date="1994" name="J. Bacteriol.">
        <title>The DNA damage-inducible dinD gene of Escherichia coli is equivalent to orfY upstream of pyrE.</title>
        <authorList>
            <person name="Lundegaard C."/>
            <person name="Jensen K.F."/>
        </authorList>
    </citation>
    <scope>IDENTIFICATION OF GENE</scope>
</reference>
<reference key="8">
    <citation type="journal article" date="1994" name="J. Mol. Biol.">
        <title>Identification of high affinity binding sites for LexA which define new DNA damage-inducible genes in Escherichia coli.</title>
        <authorList>
            <person name="Lewis K.L."/>
            <person name="Harlow G.R."/>
            <person name="Gregg-Jolly L.A."/>
            <person name="Mount D.W."/>
        </authorList>
    </citation>
    <scope>IDENTIFICATION OF GENE</scope>
</reference>
<reference key="9">
    <citation type="journal article" date="1995" name="J. Bacteriol.">
        <title>The pcsA gene is identical to dinD in Escherichia coli.</title>
        <authorList>
            <person name="Ohmori H."/>
            <person name="Saito M."/>
            <person name="Yasuda T."/>
            <person name="Nagata T."/>
            <person name="Fujii T."/>
            <person name="Wachi M."/>
            <person name="Nagai K."/>
        </authorList>
    </citation>
    <scope>IDENTIFICATION OF GENE</scope>
</reference>
<dbReference type="EMBL" id="X14235">
    <property type="protein sequence ID" value="CAA32452.1"/>
    <property type="molecule type" value="Genomic_DNA"/>
</dbReference>
<dbReference type="EMBL" id="L10328">
    <property type="protein sequence ID" value="AAA61998.1"/>
    <property type="status" value="ALT_INIT"/>
    <property type="molecule type" value="Genomic_DNA"/>
</dbReference>
<dbReference type="EMBL" id="U00096">
    <property type="protein sequence ID" value="AAC76669.2"/>
    <property type="molecule type" value="Genomic_DNA"/>
</dbReference>
<dbReference type="EMBL" id="AP009048">
    <property type="protein sequence ID" value="BAE77648.1"/>
    <property type="molecule type" value="Genomic_DNA"/>
</dbReference>
<dbReference type="EMBL" id="M31529">
    <property type="status" value="NOT_ANNOTATED_CDS"/>
    <property type="molecule type" value="Genomic_DNA"/>
</dbReference>
<dbReference type="PIR" id="G65165">
    <property type="entry name" value="G65165"/>
</dbReference>
<dbReference type="RefSeq" id="NP_418102.2">
    <property type="nucleotide sequence ID" value="NC_000913.3"/>
</dbReference>
<dbReference type="RefSeq" id="WP_001350563.1">
    <property type="nucleotide sequence ID" value="NZ_LN832404.1"/>
</dbReference>
<dbReference type="SMR" id="P23840"/>
<dbReference type="BioGRID" id="4262564">
    <property type="interactions" value="177"/>
</dbReference>
<dbReference type="BioGRID" id="852460">
    <property type="interactions" value="2"/>
</dbReference>
<dbReference type="FunCoup" id="P23840">
    <property type="interactions" value="9"/>
</dbReference>
<dbReference type="IntAct" id="P23840">
    <property type="interactions" value="8"/>
</dbReference>
<dbReference type="STRING" id="511145.b3645"/>
<dbReference type="PaxDb" id="511145-b3645"/>
<dbReference type="EnsemblBacteria" id="AAC76669">
    <property type="protein sequence ID" value="AAC76669"/>
    <property type="gene ID" value="b3645"/>
</dbReference>
<dbReference type="GeneID" id="948153"/>
<dbReference type="KEGG" id="ecj:JW3620"/>
<dbReference type="KEGG" id="eco:b3645"/>
<dbReference type="KEGG" id="ecoc:C3026_19750"/>
<dbReference type="PATRIC" id="fig|511145.12.peg.3765"/>
<dbReference type="EchoBASE" id="EB1179"/>
<dbReference type="eggNOG" id="COG3645">
    <property type="taxonomic scope" value="Bacteria"/>
</dbReference>
<dbReference type="HOGENOM" id="CLU_065349_0_0_6"/>
<dbReference type="InParanoid" id="P23840"/>
<dbReference type="OMA" id="FQNHGYK"/>
<dbReference type="OrthoDB" id="9803893at2"/>
<dbReference type="BioCyc" id="EcoCyc:EG11193-MONOMER"/>
<dbReference type="PRO" id="PR:P23840"/>
<dbReference type="Proteomes" id="UP000000625">
    <property type="component" value="Chromosome"/>
</dbReference>
<dbReference type="GO" id="GO:0006974">
    <property type="term" value="P:DNA damage response"/>
    <property type="evidence" value="ECO:0000270"/>
    <property type="project" value="EcoliWiki"/>
</dbReference>
<dbReference type="GO" id="GO:0009432">
    <property type="term" value="P:SOS response"/>
    <property type="evidence" value="ECO:0000315"/>
    <property type="project" value="EcoCyc"/>
</dbReference>
<dbReference type="InterPro" id="IPR003497">
    <property type="entry name" value="BRO_N_domain"/>
</dbReference>
<dbReference type="NCBIfam" id="NF008573">
    <property type="entry name" value="PRK11525.1"/>
    <property type="match status" value="1"/>
</dbReference>
<dbReference type="Pfam" id="PF02498">
    <property type="entry name" value="Bro-N"/>
    <property type="match status" value="1"/>
</dbReference>
<sequence>MNEHHQPFEEIKLINANGAEQWSARQLGKLLGYSEYRHFIPVLTRAKEACENSGHTIDDHFEEILDMVKIGSNAKRALKDIVLSRYACYLVVQNGDPAKPVIAAGQTYFAIQTRRQELADDEAFKQLREDEKRLFLRNELKEHNKQLVEAAQQAGVATATDFAIFQNHGYQGLYGGLDQKAIHQRKGLKKNQKILDHMGSTELAANLFRATQTEEKLKRDGVNSKQQANTTHFDVGRKVRQTIQELGGTMPEELPTPQVSIKQLENSVKITEKK</sequence>
<feature type="chain" id="PRO_0000079902" description="DNA damage-inducible protein D">
    <location>
        <begin position="1"/>
        <end position="274"/>
    </location>
</feature>
<protein>
    <recommendedName>
        <fullName>DNA damage-inducible protein D</fullName>
    </recommendedName>
</protein>
<evidence type="ECO:0000269" key="1">
    <source>
    </source>
</evidence>
<evidence type="ECO:0000303" key="2">
    <source>
    </source>
</evidence>
<evidence type="ECO:0000305" key="3"/>
<organism>
    <name type="scientific">Escherichia coli (strain K12)</name>
    <dbReference type="NCBI Taxonomy" id="83333"/>
    <lineage>
        <taxon>Bacteria</taxon>
        <taxon>Pseudomonadati</taxon>
        <taxon>Pseudomonadota</taxon>
        <taxon>Gammaproteobacteria</taxon>
        <taxon>Enterobacterales</taxon>
        <taxon>Enterobacteriaceae</taxon>
        <taxon>Escherichia</taxon>
    </lineage>
</organism>
<gene>
    <name type="primary">dinD</name>
    <name evidence="2" type="synonym">orfY</name>
    <name type="synonym">pcsA</name>
    <name type="synonym">yicD</name>
    <name type="ordered locus">b3645</name>
    <name type="ordered locus">JW3620</name>
</gene>
<comment type="disruption phenotype">
    <text evidence="1">A double yicC-dniD deletion in rich medium makes filamentous cells with little DNA in stationary phase, has no growth defect in minimal medium, does not grow at 45 degrees Celsius. A single dinD deletion has a similar but less extreme phenotype.</text>
</comment>
<comment type="sequence caution" evidence="3">
    <conflict type="erroneous initiation">
        <sequence resource="EMBL-CDS" id="AAA61998"/>
    </conflict>
    <text>Extended N-terminus.</text>
</comment>